<dbReference type="EC" id="3.4.11.1"/>
<dbReference type="EC" id="3.4.11.10"/>
<dbReference type="EMBL" id="AE005174">
    <property type="protein sequence ID" value="AAG59459.1"/>
    <property type="molecule type" value="Genomic_DNA"/>
</dbReference>
<dbReference type="EMBL" id="BA000007">
    <property type="protein sequence ID" value="BAB38660.1"/>
    <property type="molecule type" value="Genomic_DNA"/>
</dbReference>
<dbReference type="PIR" id="E91283">
    <property type="entry name" value="E91283"/>
</dbReference>
<dbReference type="PIR" id="G86124">
    <property type="entry name" value="G86124"/>
</dbReference>
<dbReference type="RefSeq" id="NP_313264.1">
    <property type="nucleotide sequence ID" value="NC_002695.1"/>
</dbReference>
<dbReference type="RefSeq" id="WP_000397144.1">
    <property type="nucleotide sequence ID" value="NZ_VOAI01000023.1"/>
</dbReference>
<dbReference type="SMR" id="P68768"/>
<dbReference type="STRING" id="155864.Z5872"/>
<dbReference type="MEROPS" id="M17.003"/>
<dbReference type="GeneID" id="913804"/>
<dbReference type="GeneID" id="93777558"/>
<dbReference type="KEGG" id="ece:Z5872"/>
<dbReference type="KEGG" id="ecs:ECs_5237"/>
<dbReference type="PATRIC" id="fig|386585.9.peg.5474"/>
<dbReference type="eggNOG" id="COG0260">
    <property type="taxonomic scope" value="Bacteria"/>
</dbReference>
<dbReference type="HOGENOM" id="CLU_013734_2_2_6"/>
<dbReference type="OMA" id="WPMPLPE"/>
<dbReference type="Proteomes" id="UP000000558">
    <property type="component" value="Chromosome"/>
</dbReference>
<dbReference type="Proteomes" id="UP000002519">
    <property type="component" value="Chromosome"/>
</dbReference>
<dbReference type="GO" id="GO:0005737">
    <property type="term" value="C:cytoplasm"/>
    <property type="evidence" value="ECO:0007669"/>
    <property type="project" value="UniProtKB-UniRule"/>
</dbReference>
<dbReference type="GO" id="GO:0030145">
    <property type="term" value="F:manganese ion binding"/>
    <property type="evidence" value="ECO:0007669"/>
    <property type="project" value="UniProtKB-UniRule"/>
</dbReference>
<dbReference type="GO" id="GO:0070006">
    <property type="term" value="F:metalloaminopeptidase activity"/>
    <property type="evidence" value="ECO:0007669"/>
    <property type="project" value="InterPro"/>
</dbReference>
<dbReference type="GO" id="GO:0006508">
    <property type="term" value="P:proteolysis"/>
    <property type="evidence" value="ECO:0007669"/>
    <property type="project" value="UniProtKB-KW"/>
</dbReference>
<dbReference type="CDD" id="cd00433">
    <property type="entry name" value="Peptidase_M17"/>
    <property type="match status" value="1"/>
</dbReference>
<dbReference type="FunFam" id="3.40.220.10:FF:000001">
    <property type="entry name" value="Probable cytosol aminopeptidase"/>
    <property type="match status" value="1"/>
</dbReference>
<dbReference type="FunFam" id="3.40.630.10:FF:000004">
    <property type="entry name" value="Probable cytosol aminopeptidase"/>
    <property type="match status" value="1"/>
</dbReference>
<dbReference type="Gene3D" id="3.40.220.10">
    <property type="entry name" value="Leucine Aminopeptidase, subunit E, domain 1"/>
    <property type="match status" value="1"/>
</dbReference>
<dbReference type="Gene3D" id="3.40.630.10">
    <property type="entry name" value="Zn peptidases"/>
    <property type="match status" value="1"/>
</dbReference>
<dbReference type="HAMAP" id="MF_00181">
    <property type="entry name" value="Cytosol_peptidase_M17"/>
    <property type="match status" value="1"/>
</dbReference>
<dbReference type="InterPro" id="IPR011356">
    <property type="entry name" value="Leucine_aapep/pepB"/>
</dbReference>
<dbReference type="InterPro" id="IPR043472">
    <property type="entry name" value="Macro_dom-like"/>
</dbReference>
<dbReference type="InterPro" id="IPR000819">
    <property type="entry name" value="Peptidase_M17_C"/>
</dbReference>
<dbReference type="InterPro" id="IPR023042">
    <property type="entry name" value="Peptidase_M17_leu_NH2_pept"/>
</dbReference>
<dbReference type="InterPro" id="IPR008283">
    <property type="entry name" value="Peptidase_M17_N"/>
</dbReference>
<dbReference type="NCBIfam" id="NF002072">
    <property type="entry name" value="PRK00913.1-1"/>
    <property type="match status" value="1"/>
</dbReference>
<dbReference type="NCBIfam" id="NF002073">
    <property type="entry name" value="PRK00913.1-2"/>
    <property type="match status" value="1"/>
</dbReference>
<dbReference type="NCBIfam" id="NF002074">
    <property type="entry name" value="PRK00913.1-4"/>
    <property type="match status" value="1"/>
</dbReference>
<dbReference type="PANTHER" id="PTHR11963:SF23">
    <property type="entry name" value="CYTOSOL AMINOPEPTIDASE"/>
    <property type="match status" value="1"/>
</dbReference>
<dbReference type="PANTHER" id="PTHR11963">
    <property type="entry name" value="LEUCINE AMINOPEPTIDASE-RELATED"/>
    <property type="match status" value="1"/>
</dbReference>
<dbReference type="Pfam" id="PF00883">
    <property type="entry name" value="Peptidase_M17"/>
    <property type="match status" value="1"/>
</dbReference>
<dbReference type="Pfam" id="PF02789">
    <property type="entry name" value="Peptidase_M17_N"/>
    <property type="match status" value="1"/>
</dbReference>
<dbReference type="PRINTS" id="PR00481">
    <property type="entry name" value="LAMNOPPTDASE"/>
</dbReference>
<dbReference type="SUPFAM" id="SSF52949">
    <property type="entry name" value="Macro domain-like"/>
    <property type="match status" value="1"/>
</dbReference>
<dbReference type="SUPFAM" id="SSF53187">
    <property type="entry name" value="Zn-dependent exopeptidases"/>
    <property type="match status" value="1"/>
</dbReference>
<dbReference type="PROSITE" id="PS00631">
    <property type="entry name" value="CYTOSOL_AP"/>
    <property type="match status" value="1"/>
</dbReference>
<accession>P68768</accession>
<accession>P11648</accession>
<sequence>MEFSVKSGSPEKQRSACIVVGVFEPRRLSPIAEQLDKISDGYISALLRRGELEGKPGQTLLLHHVPNVLSERILLIGCGKERELDERQYKQVIQKTINTLNDTGSMEAVCFLTELHVKGRNNYWKVRQAVETAKETLYSFDQLKTNKSEPRRPLRKMVFNVPTRRELTSGERAIQHGLAIAAGIKAAKDLGNMPPNICNAAYLASQARQLADSYSKNVITRVIGEQQMKELGMHSYLAVGQGSQNESLMSVIEYKGNASEDARPIVLVGKGLTFDSGGISIKPSEGMDEMKYDMCGAAAVYGVMRMVAELQLPINVIGVLAGCENMPGGRAYRPGDVLTTMSGQTVEVLNTDAEGRLVLCDVLTYVERFEPEAVIDVATLTGACVIALGHHITGLMANHNPLAHELIAASEQSGDRAWRLPLGDEYQEQLESNFADMANIGGRPGGAITAGCFLSRFTRKYNWAHLDIAGTAWRSGKAKGATGRPVALLAQFLLNRAGFNGEE</sequence>
<reference key="1">
    <citation type="journal article" date="2001" name="Nature">
        <title>Genome sequence of enterohaemorrhagic Escherichia coli O157:H7.</title>
        <authorList>
            <person name="Perna N.T."/>
            <person name="Plunkett G. III"/>
            <person name="Burland V."/>
            <person name="Mau B."/>
            <person name="Glasner J.D."/>
            <person name="Rose D.J."/>
            <person name="Mayhew G.F."/>
            <person name="Evans P.S."/>
            <person name="Gregor J."/>
            <person name="Kirkpatrick H.A."/>
            <person name="Posfai G."/>
            <person name="Hackett J."/>
            <person name="Klink S."/>
            <person name="Boutin A."/>
            <person name="Shao Y."/>
            <person name="Miller L."/>
            <person name="Grotbeck E.J."/>
            <person name="Davis N.W."/>
            <person name="Lim A."/>
            <person name="Dimalanta E.T."/>
            <person name="Potamousis K."/>
            <person name="Apodaca J."/>
            <person name="Anantharaman T.S."/>
            <person name="Lin J."/>
            <person name="Yen G."/>
            <person name="Schwartz D.C."/>
            <person name="Welch R.A."/>
            <person name="Blattner F.R."/>
        </authorList>
    </citation>
    <scope>NUCLEOTIDE SEQUENCE [LARGE SCALE GENOMIC DNA]</scope>
    <source>
        <strain>O157:H7 / EDL933 / ATCC 700927 / EHEC</strain>
    </source>
</reference>
<reference key="2">
    <citation type="journal article" date="2001" name="DNA Res.">
        <title>Complete genome sequence of enterohemorrhagic Escherichia coli O157:H7 and genomic comparison with a laboratory strain K-12.</title>
        <authorList>
            <person name="Hayashi T."/>
            <person name="Makino K."/>
            <person name="Ohnishi M."/>
            <person name="Kurokawa K."/>
            <person name="Ishii K."/>
            <person name="Yokoyama K."/>
            <person name="Han C.-G."/>
            <person name="Ohtsubo E."/>
            <person name="Nakayama K."/>
            <person name="Murata T."/>
            <person name="Tanaka M."/>
            <person name="Tobe T."/>
            <person name="Iida T."/>
            <person name="Takami H."/>
            <person name="Honda T."/>
            <person name="Sasakawa C."/>
            <person name="Ogasawara N."/>
            <person name="Yasunaga T."/>
            <person name="Kuhara S."/>
            <person name="Shiba T."/>
            <person name="Hattori M."/>
            <person name="Shinagawa H."/>
        </authorList>
    </citation>
    <scope>NUCLEOTIDE SEQUENCE [LARGE SCALE GENOMIC DNA]</scope>
    <source>
        <strain>O157:H7 / Sakai / RIMD 0509952 / EHEC</strain>
    </source>
</reference>
<protein>
    <recommendedName>
        <fullName>Cytosol aminopeptidase</fullName>
        <ecNumber>3.4.11.1</ecNumber>
    </recommendedName>
    <alternativeName>
        <fullName>Aminopeptidase A/I</fullName>
    </alternativeName>
    <alternativeName>
        <fullName>Leucine aminopeptidase</fullName>
        <shortName>LAP</shortName>
        <ecNumber>3.4.11.10</ecNumber>
    </alternativeName>
    <alternativeName>
        <fullName>Leucyl aminopeptidase</fullName>
    </alternativeName>
</protein>
<comment type="function">
    <text evidence="1">Presumably involved in the processing and regular turnover of intracellular proteins. Catalyzes the removal of unsubstituted N-terminal amino acids from various peptides. Required for plasmid ColE1 site-specific recombination but not in its aminopeptidase activity. Could act as a structural component of the putative nucleoprotein complex in which the Xer recombination reaction takes place (By similarity).</text>
</comment>
<comment type="catalytic activity">
    <reaction>
        <text>Release of an N-terminal amino acid, Xaa-|-Yaa-, in which Xaa is preferably Leu, but may be other amino acids including Pro although not Arg or Lys, and Yaa may be Pro. Amino acid amides and methyl esters are also readily hydrolyzed, but rates on arylamides are exceedingly low.</text>
        <dbReference type="EC" id="3.4.11.1"/>
    </reaction>
</comment>
<comment type="catalytic activity">
    <reaction>
        <text>Release of an N-terminal amino acid, preferentially leucine, but not glutamic or aspartic acids.</text>
        <dbReference type="EC" id="3.4.11.10"/>
    </reaction>
</comment>
<comment type="cofactor">
    <cofactor evidence="1">
        <name>Mn(2+)</name>
        <dbReference type="ChEBI" id="CHEBI:29035"/>
    </cofactor>
    <text evidence="1">Binds 2 manganese ions per subunit.</text>
</comment>
<comment type="activity regulation">
    <text evidence="1">Inhibited by zinc and EDTA.</text>
</comment>
<comment type="subunit">
    <text evidence="1">Homohexamer.</text>
</comment>
<comment type="similarity">
    <text evidence="3">Belongs to the peptidase M17 family.</text>
</comment>
<keyword id="KW-0031">Aminopeptidase</keyword>
<keyword id="KW-0378">Hydrolase</keyword>
<keyword id="KW-0464">Manganese</keyword>
<keyword id="KW-0479">Metal-binding</keyword>
<keyword id="KW-0645">Protease</keyword>
<keyword id="KW-1185">Reference proteome</keyword>
<proteinExistence type="inferred from homology"/>
<organism>
    <name type="scientific">Escherichia coli O157:H7</name>
    <dbReference type="NCBI Taxonomy" id="83334"/>
    <lineage>
        <taxon>Bacteria</taxon>
        <taxon>Pseudomonadati</taxon>
        <taxon>Pseudomonadota</taxon>
        <taxon>Gammaproteobacteria</taxon>
        <taxon>Enterobacterales</taxon>
        <taxon>Enterobacteriaceae</taxon>
        <taxon>Escherichia</taxon>
    </lineage>
</organism>
<evidence type="ECO:0000250" key="1"/>
<evidence type="ECO:0000255" key="2"/>
<evidence type="ECO:0000305" key="3"/>
<feature type="chain" id="PRO_0000165752" description="Cytosol aminopeptidase">
    <location>
        <begin position="1"/>
        <end position="503"/>
    </location>
</feature>
<feature type="active site" evidence="2">
    <location>
        <position position="282"/>
    </location>
</feature>
<feature type="active site" evidence="2">
    <location>
        <position position="356"/>
    </location>
</feature>
<feature type="binding site" evidence="1">
    <location>
        <position position="270"/>
    </location>
    <ligand>
        <name>Mn(2+)</name>
        <dbReference type="ChEBI" id="CHEBI:29035"/>
        <label>2</label>
    </ligand>
</feature>
<feature type="binding site" evidence="1">
    <location>
        <position position="275"/>
    </location>
    <ligand>
        <name>Mn(2+)</name>
        <dbReference type="ChEBI" id="CHEBI:29035"/>
        <label>1</label>
    </ligand>
</feature>
<feature type="binding site" evidence="1">
    <location>
        <position position="275"/>
    </location>
    <ligand>
        <name>Mn(2+)</name>
        <dbReference type="ChEBI" id="CHEBI:29035"/>
        <label>2</label>
    </ligand>
</feature>
<feature type="binding site" evidence="1">
    <location>
        <position position="293"/>
    </location>
    <ligand>
        <name>Mn(2+)</name>
        <dbReference type="ChEBI" id="CHEBI:29035"/>
        <label>2</label>
    </ligand>
</feature>
<feature type="binding site" evidence="1">
    <location>
        <position position="352"/>
    </location>
    <ligand>
        <name>Mn(2+)</name>
        <dbReference type="ChEBI" id="CHEBI:29035"/>
        <label>1</label>
    </ligand>
</feature>
<feature type="binding site" evidence="1">
    <location>
        <position position="354"/>
    </location>
    <ligand>
        <name>Mn(2+)</name>
        <dbReference type="ChEBI" id="CHEBI:29035"/>
        <label>1</label>
    </ligand>
</feature>
<feature type="binding site" evidence="1">
    <location>
        <position position="354"/>
    </location>
    <ligand>
        <name>Mn(2+)</name>
        <dbReference type="ChEBI" id="CHEBI:29035"/>
        <label>2</label>
    </ligand>
</feature>
<gene>
    <name type="primary">pepA</name>
    <name type="synonym">carP</name>
    <name type="synonym">xerB</name>
    <name type="ordered locus">Z5872</name>
    <name type="ordered locus">ECs5237</name>
</gene>
<name>AMPA_ECO57</name>